<keyword id="KW-0009">Actin-binding</keyword>
<keyword id="KW-0067">ATP-binding</keyword>
<keyword id="KW-0963">Cytoplasm</keyword>
<keyword id="KW-0206">Cytoskeleton</keyword>
<keyword id="KW-0378">Hydrolase</keyword>
<keyword id="KW-0505">Motor protein</keyword>
<keyword id="KW-0518">Myosin</keyword>
<keyword id="KW-0547">Nucleotide-binding</keyword>
<keyword id="KW-0597">Phosphoprotein</keyword>
<keyword id="KW-1185">Reference proteome</keyword>
<keyword id="KW-0677">Repeat</keyword>
<keyword id="KW-0728">SH3 domain</keyword>
<reference key="1">
    <citation type="journal article" date="2008" name="Nature">
        <title>The genome of Laccaria bicolor provides insights into mycorrhizal symbiosis.</title>
        <authorList>
            <person name="Martin F."/>
            <person name="Aerts A."/>
            <person name="Ahren D."/>
            <person name="Brun A."/>
            <person name="Danchin E.G.J."/>
            <person name="Duchaussoy F."/>
            <person name="Gibon J."/>
            <person name="Kohler A."/>
            <person name="Lindquist E."/>
            <person name="Pereda V."/>
            <person name="Salamov A."/>
            <person name="Shapiro H.J."/>
            <person name="Wuyts J."/>
            <person name="Blaudez D."/>
            <person name="Buee M."/>
            <person name="Brokstein P."/>
            <person name="Canbaeck B."/>
            <person name="Cohen D."/>
            <person name="Courty P.E."/>
            <person name="Coutinho P.M."/>
            <person name="Delaruelle C."/>
            <person name="Detter J.C."/>
            <person name="Deveau A."/>
            <person name="DiFazio S."/>
            <person name="Duplessis S."/>
            <person name="Fraissinet-Tachet L."/>
            <person name="Lucic E."/>
            <person name="Frey-Klett P."/>
            <person name="Fourrey C."/>
            <person name="Feussner I."/>
            <person name="Gay G."/>
            <person name="Grimwood J."/>
            <person name="Hoegger P.J."/>
            <person name="Jain P."/>
            <person name="Kilaru S."/>
            <person name="Labbe J."/>
            <person name="Lin Y.C."/>
            <person name="Legue V."/>
            <person name="Le Tacon F."/>
            <person name="Marmeisse R."/>
            <person name="Melayah D."/>
            <person name="Montanini B."/>
            <person name="Muratet M."/>
            <person name="Nehls U."/>
            <person name="Niculita-Hirzel H."/>
            <person name="Oudot-Le Secq M.P."/>
            <person name="Peter M."/>
            <person name="Quesneville H."/>
            <person name="Rajashekar B."/>
            <person name="Reich M."/>
            <person name="Rouhier N."/>
            <person name="Schmutz J."/>
            <person name="Yin T."/>
            <person name="Chalot M."/>
            <person name="Henrissat B."/>
            <person name="Kuees U."/>
            <person name="Lucas S."/>
            <person name="Van de Peer Y."/>
            <person name="Podila G.K."/>
            <person name="Polle A."/>
            <person name="Pukkila P.J."/>
            <person name="Richardson P.M."/>
            <person name="Rouze P."/>
            <person name="Sanders I.R."/>
            <person name="Stajich J.E."/>
            <person name="Tunlid A."/>
            <person name="Tuskan G."/>
            <person name="Grigoriev I.V."/>
        </authorList>
    </citation>
    <scope>NUCLEOTIDE SEQUENCE [LARGE SCALE GENOMIC DNA]</scope>
    <source>
        <strain>S238N-H82 / ATCC MYA-4686</strain>
    </source>
</reference>
<name>MYO1_LACBS</name>
<proteinExistence type="inferred from homology"/>
<evidence type="ECO:0000250" key="1"/>
<evidence type="ECO:0000255" key="2"/>
<evidence type="ECO:0000255" key="3">
    <source>
        <dbReference type="PROSITE-ProRule" id="PRU00192"/>
    </source>
</evidence>
<evidence type="ECO:0000255" key="4">
    <source>
        <dbReference type="PROSITE-ProRule" id="PRU00782"/>
    </source>
</evidence>
<evidence type="ECO:0000255" key="5">
    <source>
        <dbReference type="PROSITE-ProRule" id="PRU01093"/>
    </source>
</evidence>
<evidence type="ECO:0000256" key="6">
    <source>
        <dbReference type="SAM" id="MobiDB-lite"/>
    </source>
</evidence>
<evidence type="ECO:0000305" key="7"/>
<gene>
    <name type="primary">MYO1</name>
    <name type="ORF">LACBIDRAFT_229023</name>
</gene>
<protein>
    <recommendedName>
        <fullName>Myosin-1</fullName>
    </recommendedName>
    <alternativeName>
        <fullName>Class I unconventional myosin</fullName>
    </alternativeName>
    <alternativeName>
        <fullName>Type I myosin</fullName>
    </alternativeName>
</protein>
<organism>
    <name type="scientific">Laccaria bicolor (strain S238N-H82 / ATCC MYA-4686)</name>
    <name type="common">Bicoloured deceiver</name>
    <name type="synonym">Laccaria laccata var. bicolor</name>
    <dbReference type="NCBI Taxonomy" id="486041"/>
    <lineage>
        <taxon>Eukaryota</taxon>
        <taxon>Fungi</taxon>
        <taxon>Dikarya</taxon>
        <taxon>Basidiomycota</taxon>
        <taxon>Agaricomycotina</taxon>
        <taxon>Agaricomycetes</taxon>
        <taxon>Agaricomycetidae</taxon>
        <taxon>Agaricales</taxon>
        <taxon>Agaricineae</taxon>
        <taxon>Hydnangiaceae</taxon>
        <taxon>Laccaria</taxon>
    </lineage>
</organism>
<dbReference type="EMBL" id="DS547091">
    <property type="protein sequence ID" value="EDR15829.1"/>
    <property type="status" value="ALT_SEQ"/>
    <property type="molecule type" value="Genomic_DNA"/>
</dbReference>
<dbReference type="RefSeq" id="XP_001874037.1">
    <property type="nucleotide sequence ID" value="XM_001874002.1"/>
</dbReference>
<dbReference type="SMR" id="B0CRJ3"/>
<dbReference type="FunCoup" id="B0CRJ3">
    <property type="interactions" value="94"/>
</dbReference>
<dbReference type="STRING" id="486041.B0CRJ3"/>
<dbReference type="GeneID" id="6069346"/>
<dbReference type="KEGG" id="lbc:LACBIDRAFT_229023"/>
<dbReference type="HOGENOM" id="CLU_000192_7_6_1"/>
<dbReference type="InParanoid" id="B0CRJ3"/>
<dbReference type="OrthoDB" id="6108017at2759"/>
<dbReference type="Proteomes" id="UP000001194">
    <property type="component" value="Unassembled WGS sequence"/>
</dbReference>
<dbReference type="GO" id="GO:0030479">
    <property type="term" value="C:actin cortical patch"/>
    <property type="evidence" value="ECO:0007669"/>
    <property type="project" value="UniProtKB-SubCell"/>
</dbReference>
<dbReference type="GO" id="GO:0051286">
    <property type="term" value="C:cell tip"/>
    <property type="evidence" value="ECO:0007669"/>
    <property type="project" value="TreeGrafter"/>
</dbReference>
<dbReference type="GO" id="GO:0016459">
    <property type="term" value="C:myosin complex"/>
    <property type="evidence" value="ECO:0007669"/>
    <property type="project" value="UniProtKB-KW"/>
</dbReference>
<dbReference type="GO" id="GO:0005886">
    <property type="term" value="C:plasma membrane"/>
    <property type="evidence" value="ECO:0007669"/>
    <property type="project" value="TreeGrafter"/>
</dbReference>
<dbReference type="GO" id="GO:0051015">
    <property type="term" value="F:actin filament binding"/>
    <property type="evidence" value="ECO:0007669"/>
    <property type="project" value="TreeGrafter"/>
</dbReference>
<dbReference type="GO" id="GO:0005524">
    <property type="term" value="F:ATP binding"/>
    <property type="evidence" value="ECO:0007669"/>
    <property type="project" value="UniProtKB-KW"/>
</dbReference>
<dbReference type="GO" id="GO:0016787">
    <property type="term" value="F:hydrolase activity"/>
    <property type="evidence" value="ECO:0007669"/>
    <property type="project" value="UniProtKB-KW"/>
</dbReference>
<dbReference type="GO" id="GO:0000146">
    <property type="term" value="F:microfilament motor activity"/>
    <property type="evidence" value="ECO:0007669"/>
    <property type="project" value="TreeGrafter"/>
</dbReference>
<dbReference type="GO" id="GO:0051666">
    <property type="term" value="P:actin cortical patch localization"/>
    <property type="evidence" value="ECO:0007669"/>
    <property type="project" value="TreeGrafter"/>
</dbReference>
<dbReference type="GO" id="GO:0007015">
    <property type="term" value="P:actin filament organization"/>
    <property type="evidence" value="ECO:0007669"/>
    <property type="project" value="TreeGrafter"/>
</dbReference>
<dbReference type="GO" id="GO:0006897">
    <property type="term" value="P:endocytosis"/>
    <property type="evidence" value="ECO:0007669"/>
    <property type="project" value="TreeGrafter"/>
</dbReference>
<dbReference type="CDD" id="cd01378">
    <property type="entry name" value="MYSc_Myo1"/>
    <property type="match status" value="1"/>
</dbReference>
<dbReference type="CDD" id="cd11858">
    <property type="entry name" value="SH3_Myosin-I_fungi"/>
    <property type="match status" value="1"/>
</dbReference>
<dbReference type="FunFam" id="1.10.10.820:FF:000001">
    <property type="entry name" value="Myosin heavy chain"/>
    <property type="match status" value="1"/>
</dbReference>
<dbReference type="FunFam" id="1.20.120.720:FF:000015">
    <property type="entry name" value="Myosin I"/>
    <property type="match status" value="1"/>
</dbReference>
<dbReference type="FunFam" id="1.20.5.4820:FF:000004">
    <property type="entry name" value="Myosin IE"/>
    <property type="match status" value="1"/>
</dbReference>
<dbReference type="FunFam" id="1.20.58.530:FF:000007">
    <property type="entry name" value="Myosin IE"/>
    <property type="match status" value="1"/>
</dbReference>
<dbReference type="Gene3D" id="1.10.10.820">
    <property type="match status" value="1"/>
</dbReference>
<dbReference type="Gene3D" id="1.20.5.4820">
    <property type="match status" value="1"/>
</dbReference>
<dbReference type="Gene3D" id="1.20.58.530">
    <property type="match status" value="1"/>
</dbReference>
<dbReference type="Gene3D" id="3.40.850.10">
    <property type="entry name" value="Kinesin motor domain"/>
    <property type="match status" value="1"/>
</dbReference>
<dbReference type="Gene3D" id="1.20.120.720">
    <property type="entry name" value="Myosin VI head, motor domain, U50 subdomain"/>
    <property type="match status" value="1"/>
</dbReference>
<dbReference type="Gene3D" id="2.30.30.40">
    <property type="entry name" value="SH3 Domains"/>
    <property type="match status" value="1"/>
</dbReference>
<dbReference type="InterPro" id="IPR035535">
    <property type="entry name" value="Fungal_myosin-I_SH3"/>
</dbReference>
<dbReference type="InterPro" id="IPR036961">
    <property type="entry name" value="Kinesin_motor_dom_sf"/>
</dbReference>
<dbReference type="InterPro" id="IPR001609">
    <property type="entry name" value="Myosin_head_motor_dom-like"/>
</dbReference>
<dbReference type="InterPro" id="IPR010926">
    <property type="entry name" value="Myosin_TH1"/>
</dbReference>
<dbReference type="InterPro" id="IPR036072">
    <property type="entry name" value="MYSc_Myo1"/>
</dbReference>
<dbReference type="InterPro" id="IPR027417">
    <property type="entry name" value="P-loop_NTPase"/>
</dbReference>
<dbReference type="InterPro" id="IPR036028">
    <property type="entry name" value="SH3-like_dom_sf"/>
</dbReference>
<dbReference type="InterPro" id="IPR001452">
    <property type="entry name" value="SH3_domain"/>
</dbReference>
<dbReference type="PANTHER" id="PTHR13140">
    <property type="entry name" value="MYOSIN"/>
    <property type="match status" value="1"/>
</dbReference>
<dbReference type="PANTHER" id="PTHR13140:SF837">
    <property type="entry name" value="MYOSIN-3-RELATED"/>
    <property type="match status" value="1"/>
</dbReference>
<dbReference type="Pfam" id="PF00063">
    <property type="entry name" value="Myosin_head"/>
    <property type="match status" value="1"/>
</dbReference>
<dbReference type="Pfam" id="PF06017">
    <property type="entry name" value="Myosin_TH1"/>
    <property type="match status" value="1"/>
</dbReference>
<dbReference type="Pfam" id="PF07653">
    <property type="entry name" value="SH3_2"/>
    <property type="match status" value="1"/>
</dbReference>
<dbReference type="PRINTS" id="PR00193">
    <property type="entry name" value="MYOSINHEAVY"/>
</dbReference>
<dbReference type="SMART" id="SM00242">
    <property type="entry name" value="MYSc"/>
    <property type="match status" value="1"/>
</dbReference>
<dbReference type="SMART" id="SM00326">
    <property type="entry name" value="SH3"/>
    <property type="match status" value="1"/>
</dbReference>
<dbReference type="SUPFAM" id="SSF52540">
    <property type="entry name" value="P-loop containing nucleoside triphosphate hydrolases"/>
    <property type="match status" value="1"/>
</dbReference>
<dbReference type="SUPFAM" id="SSF50044">
    <property type="entry name" value="SH3-domain"/>
    <property type="match status" value="1"/>
</dbReference>
<dbReference type="PROSITE" id="PS51456">
    <property type="entry name" value="MYOSIN_MOTOR"/>
    <property type="match status" value="1"/>
</dbReference>
<dbReference type="PROSITE" id="PS50002">
    <property type="entry name" value="SH3"/>
    <property type="match status" value="1"/>
</dbReference>
<dbReference type="PROSITE" id="PS51757">
    <property type="entry name" value="TH1"/>
    <property type="match status" value="1"/>
</dbReference>
<comment type="function">
    <text evidence="1">Type-I myosin implicated in the organization of the actin cytoskeleton. Required for proper actin cytoskeleton polarization. At the cell cortex, assembles in patch-like structures together with proteins from the actin-polymerizing machinery and promotes actin assembly. Functions as actin nucleation-promoting factor (NPF) for the Arp2/3 complex (By similarity).</text>
</comment>
<comment type="subcellular location">
    <subcellularLocation>
        <location evidence="1">Cytoplasm</location>
        <location evidence="1">Cytoskeleton</location>
        <location evidence="1">Actin patch</location>
    </subcellularLocation>
</comment>
<comment type="domain">
    <text evidence="1">The myosin motor domain displays actin-stimulated ATPase activity and generates a mechanochemical force.</text>
</comment>
<comment type="domain">
    <text evidence="1">The tail domain participates in molecular interactions that specify the role of the motor domain (By similarity). It is composed of several tail homology (TH) domains, namely a putative phospholipid-binding myosin tail domain (also named TH1), an Ala- and Pro-rich domain (TH2), followed by an SH3 domain and a C-terminal acidic domain (TH3).</text>
</comment>
<comment type="PTM">
    <text evidence="1">Phosphorylation of the TEDS site (Ser-356) is required for the polarization of the actin cytoskeleton. Phosphorylation probably activates the myosin-I ATPase activity (By similarity).</text>
</comment>
<comment type="similarity">
    <text evidence="7">Belongs to the TRAFAC class myosin-kinesin ATPase superfamily. Myosin family.</text>
</comment>
<comment type="sequence caution" evidence="7">
    <conflict type="erroneous gene model prediction">
        <sequence resource="EMBL-CDS" id="EDR15829"/>
    </conflict>
</comment>
<accession>B0CRJ3</accession>
<feature type="chain" id="PRO_0000338553" description="Myosin-1">
    <location>
        <begin position="1"/>
        <end position="1252"/>
    </location>
</feature>
<feature type="domain" description="Myosin motor" evidence="4">
    <location>
        <begin position="38"/>
        <end position="712"/>
    </location>
</feature>
<feature type="domain" description="IQ 1">
    <location>
        <begin position="716"/>
        <end position="736"/>
    </location>
</feature>
<feature type="domain" description="IQ 2">
    <location>
        <begin position="737"/>
        <end position="762"/>
    </location>
</feature>
<feature type="domain" description="TH1" evidence="5">
    <location>
        <begin position="770"/>
        <end position="953"/>
    </location>
</feature>
<feature type="domain" description="SH3" evidence="3">
    <location>
        <begin position="1046"/>
        <end position="1104"/>
    </location>
</feature>
<feature type="region of interest" description="Disordered" evidence="6">
    <location>
        <begin position="1"/>
        <end position="27"/>
    </location>
</feature>
<feature type="region of interest" description="Actin-binding" evidence="1">
    <location>
        <begin position="403"/>
        <end position="485"/>
    </location>
</feature>
<feature type="region of interest" description="Disordered" evidence="6">
    <location>
        <begin position="945"/>
        <end position="1049"/>
    </location>
</feature>
<feature type="region of interest" description="Disordered" evidence="6">
    <location>
        <begin position="1103"/>
        <end position="1228"/>
    </location>
</feature>
<feature type="compositionally biased region" description="Pro residues" evidence="6">
    <location>
        <begin position="989"/>
        <end position="999"/>
    </location>
</feature>
<feature type="compositionally biased region" description="Pro residues" evidence="6">
    <location>
        <begin position="1028"/>
        <end position="1046"/>
    </location>
</feature>
<feature type="compositionally biased region" description="Polar residues" evidence="6">
    <location>
        <begin position="1162"/>
        <end position="1175"/>
    </location>
</feature>
<feature type="compositionally biased region" description="Pro residues" evidence="6">
    <location>
        <begin position="1178"/>
        <end position="1193"/>
    </location>
</feature>
<feature type="compositionally biased region" description="Low complexity" evidence="6">
    <location>
        <begin position="1194"/>
        <end position="1203"/>
    </location>
</feature>
<feature type="compositionally biased region" description="Pro residues" evidence="6">
    <location>
        <begin position="1204"/>
        <end position="1215"/>
    </location>
</feature>
<feature type="compositionally biased region" description="Low complexity" evidence="6">
    <location>
        <begin position="1216"/>
        <end position="1228"/>
    </location>
</feature>
<feature type="binding site" evidence="2">
    <location>
        <begin position="128"/>
        <end position="135"/>
    </location>
    <ligand>
        <name>ATP</name>
        <dbReference type="ChEBI" id="CHEBI:30616"/>
    </ligand>
</feature>
<feature type="modified residue" description="Phosphoserine" evidence="1">
    <location>
        <position position="356"/>
    </location>
</feature>
<sequence length="1252" mass="138491">MAPSKKAGKKVTPASKKSAGQGKVAKADWKEGFKKKQVGVSDMTLLTTISNEGVNENLQKRWTNGEIYTYIGAVLISVNPFRGRSVETLQRYRGKNRLEVPPHVFGIAESAYYNMNAYHENQCVIISGESGAGKTEAAKRIMQYIAVVSGGQDSSIQEIKDMVLATNPLLESFGCAKTLRNNNSSRHGKYLEIMFNGVGEPVGAQITNYLLEKGRVVGQIENERNFHIFYQFTKGASDEQRELFGLQGPEAYAYTSLSNCLEVSDIDDVKDYHDTITAMGVIGLTPDEQNEIFKMLAIVLWLGNVQFEEMDDGNSSITDTGVTDFVGYLMEADSALVQKVLTSRVIETSKGGRRGSVYDVPLNPAQATSGRDALAKAIYNNLFEWIVSRINVSMKTRSAHAQIIGILDIFGFEIFEDNSFEQLCINYVNEKLQQIFIELTLKTEQEEYVREQIKWTPIKYFNNKIVCDLIEERRPPGIFAALNDACATAHADPAAADNSFVQRTAMLSSNAHFEARGSQFLVRHYAGDVMYNVAGMTDKNKDSLIKDLLDLVGSSGNTFLQTLFPDRPDPNSKKRPPTAGDRIKARALVDNLMKAQPSYIRTIKPNQNRSSSEYDVKAILHQIKYLGLNENIRVRRAGFAYRNTFEKMVERFYLLSSHTSYAGEYTWTGDSKSGCEQILKDTGIAKDEWQMGVTKAFIKNPETLFALETMRDKYWHNMAARIQRAFRNYMRYKHECARRIQRFWKNNKEGIAYAQTRDYGHQILAGRKERRRFSLLSYRRFMGDYLDLNGKSSLGEELAGACNIGGESVTFSSRIHLLVSKLGRSSKPSPRFIVVTEKAVHILILSVRDGQTQYNLERRIPLSTIKSIGMSNLRDDWLAKEGDPLISCYFKTELVSNLVKLTRSTVNVVIGPTIEYSKKKDKMAQIKFIKDETVAKDDLYKSHTVHVASGEPPNSVSRPPAKRKPGVVRPITQGKLLKAGGPSDKPKPRSVPKPKPVAQPLPGRDSTTVAPKPAIKPSVTPSSTVGQRPPPAPPRNIAPPPPPAKPETPMYRAKFAFEGQEGEMSLKKDDVVELVEKDDNGWWLVKMDGVEGWAPNNYLELVPPKAVSAPPPPPRSRPAPTTTPKISLTSVVADASSKPVSVFPGMQPSNGSATPWKKPLTADTTPASSRPSSAIGSKPPPPVAAKPKPPVIPVKPSVSAKGPAKPPIPTAPRPPAASTSRSSKPATAVGQVDLAAAVSLFVTHSRELLLMM</sequence>